<evidence type="ECO:0000250" key="1"/>
<evidence type="ECO:0000255" key="2">
    <source>
        <dbReference type="PROSITE-ProRule" id="PRU00639"/>
    </source>
</evidence>
<evidence type="ECO:0000305" key="3"/>
<name>LEGLA_XENLA</name>
<sequence length="171" mass="19184">MARSLVESEALQMGVRRLSSPLTSPVQAEVYFPRLTVPFCGHIKGGLRPGKKILIMGIVNLEPKSFDIRLTCGDSEDPAADIAIELRAEFADKQFLRNACVSGKWGEEESAIPYFPFIADQPFRVEIHCEHPQFRIIVDGHQLFDFYHRVESLSAINTIKINGDLQLTKLG</sequence>
<accession>Q68FJ4</accession>
<protein>
    <recommendedName>
        <fullName>Galectin-related protein A</fullName>
    </recommendedName>
    <alternativeName>
        <fullName>Lectin galactoside-binding-like protein A</fullName>
    </alternativeName>
</protein>
<dbReference type="EMBL" id="BC079769">
    <property type="protein sequence ID" value="AAH79769.1"/>
    <property type="molecule type" value="mRNA"/>
</dbReference>
<dbReference type="RefSeq" id="NP_001090244.1">
    <property type="nucleotide sequence ID" value="NM_001096775.1"/>
</dbReference>
<dbReference type="SMR" id="Q68FJ4"/>
<dbReference type="DNASU" id="779149"/>
<dbReference type="GeneID" id="779149"/>
<dbReference type="KEGG" id="xla:779149"/>
<dbReference type="AGR" id="Xenbase:XB-GENE-6252985"/>
<dbReference type="CTD" id="779149"/>
<dbReference type="Xenbase" id="XB-GENE-6252985">
    <property type="gene designation" value="lgalsl.S"/>
</dbReference>
<dbReference type="OrthoDB" id="9857238at2759"/>
<dbReference type="Proteomes" id="UP000186698">
    <property type="component" value="Chromosome 5S"/>
</dbReference>
<dbReference type="Bgee" id="779149">
    <property type="expression patterns" value="Expressed in zone of skin and 19 other cell types or tissues"/>
</dbReference>
<dbReference type="GO" id="GO:0030246">
    <property type="term" value="F:carbohydrate binding"/>
    <property type="evidence" value="ECO:0000318"/>
    <property type="project" value="GO_Central"/>
</dbReference>
<dbReference type="CDD" id="cd00070">
    <property type="entry name" value="GLECT"/>
    <property type="match status" value="1"/>
</dbReference>
<dbReference type="FunFam" id="2.60.120.200:FF:000046">
    <property type="entry name" value="Galectin"/>
    <property type="match status" value="1"/>
</dbReference>
<dbReference type="Gene3D" id="2.60.120.200">
    <property type="match status" value="1"/>
</dbReference>
<dbReference type="InterPro" id="IPR013320">
    <property type="entry name" value="ConA-like_dom_sf"/>
</dbReference>
<dbReference type="InterPro" id="IPR044156">
    <property type="entry name" value="Galectin-like"/>
</dbReference>
<dbReference type="InterPro" id="IPR001079">
    <property type="entry name" value="Galectin_CRD"/>
</dbReference>
<dbReference type="PANTHER" id="PTHR11346">
    <property type="entry name" value="GALECTIN"/>
    <property type="match status" value="1"/>
</dbReference>
<dbReference type="PANTHER" id="PTHR11346:SF98">
    <property type="entry name" value="GALECTIN-RELATED PROTEIN"/>
    <property type="match status" value="1"/>
</dbReference>
<dbReference type="Pfam" id="PF00337">
    <property type="entry name" value="Gal-bind_lectin"/>
    <property type="match status" value="1"/>
</dbReference>
<dbReference type="SMART" id="SM00908">
    <property type="entry name" value="Gal-bind_lectin"/>
    <property type="match status" value="1"/>
</dbReference>
<dbReference type="SMART" id="SM00276">
    <property type="entry name" value="GLECT"/>
    <property type="match status" value="1"/>
</dbReference>
<dbReference type="SUPFAM" id="SSF49899">
    <property type="entry name" value="Concanavalin A-like lectins/glucanases"/>
    <property type="match status" value="1"/>
</dbReference>
<dbReference type="PROSITE" id="PS51304">
    <property type="entry name" value="GALECTIN"/>
    <property type="match status" value="1"/>
</dbReference>
<proteinExistence type="evidence at transcript level"/>
<comment type="function">
    <text evidence="1">Does not bind lactose, and may not bind carbohydrates.</text>
</comment>
<comment type="caution">
    <text evidence="3">Most of the residues in the galectin domain that have been shown to be critical for carbohydrate-binding in other galectins are not conserved.</text>
</comment>
<gene>
    <name type="primary">lgalsl-a</name>
    <name type="synonym">grp-a</name>
</gene>
<keyword id="KW-0430">Lectin</keyword>
<keyword id="KW-1185">Reference proteome</keyword>
<feature type="chain" id="PRO_0000315772" description="Galectin-related protein A">
    <location>
        <begin position="1"/>
        <end position="171"/>
    </location>
</feature>
<feature type="domain" description="Galectin" evidence="2">
    <location>
        <begin position="38"/>
        <end position="170"/>
    </location>
</feature>
<reference key="1">
    <citation type="submission" date="2004-08" db="EMBL/GenBank/DDBJ databases">
        <authorList>
            <consortium name="NIH - Xenopus Gene Collection (XGC) project"/>
        </authorList>
    </citation>
    <scope>NUCLEOTIDE SEQUENCE [LARGE SCALE MRNA]</scope>
    <source>
        <tissue>Eye</tissue>
    </source>
</reference>
<organism>
    <name type="scientific">Xenopus laevis</name>
    <name type="common">African clawed frog</name>
    <dbReference type="NCBI Taxonomy" id="8355"/>
    <lineage>
        <taxon>Eukaryota</taxon>
        <taxon>Metazoa</taxon>
        <taxon>Chordata</taxon>
        <taxon>Craniata</taxon>
        <taxon>Vertebrata</taxon>
        <taxon>Euteleostomi</taxon>
        <taxon>Amphibia</taxon>
        <taxon>Batrachia</taxon>
        <taxon>Anura</taxon>
        <taxon>Pipoidea</taxon>
        <taxon>Pipidae</taxon>
        <taxon>Xenopodinae</taxon>
        <taxon>Xenopus</taxon>
        <taxon>Xenopus</taxon>
    </lineage>
</organism>